<gene>
    <name type="primary">garK</name>
    <name type="synonym">yhaD</name>
    <name type="ordered locus">b3124</name>
    <name type="ordered locus">JW3093</name>
</gene>
<dbReference type="EC" id="2.7.1.165" evidence="2"/>
<dbReference type="EMBL" id="D90212">
    <property type="protein sequence ID" value="BAA14239.1"/>
    <property type="status" value="ALT_INIT"/>
    <property type="molecule type" value="Genomic_DNA"/>
</dbReference>
<dbReference type="EMBL" id="U18997">
    <property type="protein sequence ID" value="AAA57927.1"/>
    <property type="status" value="ALT_INIT"/>
    <property type="molecule type" value="Genomic_DNA"/>
</dbReference>
<dbReference type="EMBL" id="U00096">
    <property type="protein sequence ID" value="AAC76158.2"/>
    <property type="molecule type" value="Genomic_DNA"/>
</dbReference>
<dbReference type="EMBL" id="AP009048">
    <property type="protein sequence ID" value="BAE77171.1"/>
    <property type="status" value="ALT_INIT"/>
    <property type="molecule type" value="Genomic_DNA"/>
</dbReference>
<dbReference type="PIR" id="JQ0614">
    <property type="entry name" value="JQ0614"/>
</dbReference>
<dbReference type="RefSeq" id="NP_417593.4">
    <property type="nucleotide sequence ID" value="NC_000913.3"/>
</dbReference>
<dbReference type="RefSeq" id="WP_001300387.1">
    <property type="nucleotide sequence ID" value="NZ_LN832404.1"/>
</dbReference>
<dbReference type="SMR" id="P23524"/>
<dbReference type="BioGRID" id="4261538">
    <property type="interactions" value="17"/>
</dbReference>
<dbReference type="DIP" id="DIP-28063N"/>
<dbReference type="FunCoup" id="P23524">
    <property type="interactions" value="506"/>
</dbReference>
<dbReference type="IntAct" id="P23524">
    <property type="interactions" value="7"/>
</dbReference>
<dbReference type="STRING" id="511145.b3124"/>
<dbReference type="jPOST" id="P23524"/>
<dbReference type="PaxDb" id="511145-b3124"/>
<dbReference type="EnsemblBacteria" id="AAC76158">
    <property type="protein sequence ID" value="AAC76158"/>
    <property type="gene ID" value="b3124"/>
</dbReference>
<dbReference type="GeneID" id="947632"/>
<dbReference type="KEGG" id="ecj:JW3093"/>
<dbReference type="KEGG" id="eco:b3124"/>
<dbReference type="KEGG" id="ecoc:C3026_17030"/>
<dbReference type="PATRIC" id="fig|1411691.4.peg.3608"/>
<dbReference type="EchoBASE" id="EB1162"/>
<dbReference type="eggNOG" id="COG1929">
    <property type="taxonomic scope" value="Bacteria"/>
</dbReference>
<dbReference type="HOGENOM" id="CLU_028255_0_1_6"/>
<dbReference type="InParanoid" id="P23524"/>
<dbReference type="OMA" id="MRVLVCP"/>
<dbReference type="OrthoDB" id="9774290at2"/>
<dbReference type="PhylomeDB" id="P23524"/>
<dbReference type="BioCyc" id="EcoCyc:GKI-MONOMER"/>
<dbReference type="BioCyc" id="MetaCyc:GKI-MONOMER"/>
<dbReference type="BRENDA" id="2.7.1.165">
    <property type="organism ID" value="2026"/>
</dbReference>
<dbReference type="SABIO-RK" id="P23524"/>
<dbReference type="PRO" id="PR:P23524"/>
<dbReference type="Proteomes" id="UP000000625">
    <property type="component" value="Chromosome"/>
</dbReference>
<dbReference type="GO" id="GO:0005524">
    <property type="term" value="F:ATP binding"/>
    <property type="evidence" value="ECO:0007669"/>
    <property type="project" value="UniProtKB-KW"/>
</dbReference>
<dbReference type="GO" id="GO:0043798">
    <property type="term" value="F:glycerate 2-kinase activity"/>
    <property type="evidence" value="ECO:0000314"/>
    <property type="project" value="EcoCyc"/>
</dbReference>
<dbReference type="GO" id="GO:0008887">
    <property type="term" value="F:glycerate kinase activity"/>
    <property type="evidence" value="ECO:0007669"/>
    <property type="project" value="InterPro"/>
</dbReference>
<dbReference type="GO" id="GO:0042838">
    <property type="term" value="P:D-glucarate catabolic process"/>
    <property type="evidence" value="ECO:0000270"/>
    <property type="project" value="EcoCyc"/>
</dbReference>
<dbReference type="GO" id="GO:0046392">
    <property type="term" value="P:galactarate catabolic process"/>
    <property type="evidence" value="ECO:0000270"/>
    <property type="project" value="EcoCyc"/>
</dbReference>
<dbReference type="GO" id="GO:0031388">
    <property type="term" value="P:organic acid phosphorylation"/>
    <property type="evidence" value="ECO:0007669"/>
    <property type="project" value="InterPro"/>
</dbReference>
<dbReference type="FunFam" id="3.90.1510.10:FF:000001">
    <property type="entry name" value="Glycerate kinase 2"/>
    <property type="match status" value="1"/>
</dbReference>
<dbReference type="Gene3D" id="3.40.50.10350">
    <property type="entry name" value="Glycerate kinase, domain 1"/>
    <property type="match status" value="1"/>
</dbReference>
<dbReference type="Gene3D" id="3.90.1510.10">
    <property type="entry name" value="Glycerate kinase, domain 2"/>
    <property type="match status" value="1"/>
</dbReference>
<dbReference type="InterPro" id="IPR018193">
    <property type="entry name" value="Glyc_kinase_flavodox-like_fold"/>
</dbReference>
<dbReference type="InterPro" id="IPR004381">
    <property type="entry name" value="Glycerate_kinase"/>
</dbReference>
<dbReference type="InterPro" id="IPR018197">
    <property type="entry name" value="Glycerate_kinase_RE-like"/>
</dbReference>
<dbReference type="InterPro" id="IPR036129">
    <property type="entry name" value="Glycerate_kinase_sf"/>
</dbReference>
<dbReference type="NCBIfam" id="TIGR00045">
    <property type="entry name" value="glycerate kinase"/>
    <property type="match status" value="1"/>
</dbReference>
<dbReference type="NCBIfam" id="NF007668">
    <property type="entry name" value="PRK10342.1"/>
    <property type="match status" value="1"/>
</dbReference>
<dbReference type="PANTHER" id="PTHR21599:SF7">
    <property type="entry name" value="GLYCERATE 2-KINASE"/>
    <property type="match status" value="1"/>
</dbReference>
<dbReference type="PANTHER" id="PTHR21599">
    <property type="entry name" value="GLYCERATE KINASE"/>
    <property type="match status" value="1"/>
</dbReference>
<dbReference type="Pfam" id="PF02595">
    <property type="entry name" value="Gly_kinase"/>
    <property type="match status" value="1"/>
</dbReference>
<dbReference type="PIRSF" id="PIRSF006078">
    <property type="entry name" value="GlxK"/>
    <property type="match status" value="1"/>
</dbReference>
<dbReference type="SUPFAM" id="SSF110738">
    <property type="entry name" value="Glycerate kinase I"/>
    <property type="match status" value="1"/>
</dbReference>
<sequence>MKIVIAPDSYKESLSASEVAQAIEKGFREIFPDAQYVSVPVADGGEGTVEAMIAATQGAERHAWVTGPLGEKVNASWGISGDGKTAFIEMAAASGLELVPAEKRDPLVTTSRGTGELILQALESGATNIIIGIGGSATNDGGAGMVQALGAKLCDANGNEIGFGGGSLNTLNDIDISGLDPRLKDCVIRVACDVTNPLVGDNGASRIFGPQKGASEAMIVELDNNLSHYAEVIKKALHVDVKDVPGAGAAGGMGAALMAFLGAELKSGIEIVTTALNLEEHIHDCTLVITGEGRIDSQSIHGKVPIGVANVAKKYHKPVIGIAGSLTDDVGVVHQHGIDAVFSVLTSIGTLDEAFRGAYDNICRASRNIAATLAIGMRNAG</sequence>
<proteinExistence type="evidence at protein level"/>
<organism>
    <name type="scientific">Escherichia coli (strain K12)</name>
    <dbReference type="NCBI Taxonomy" id="83333"/>
    <lineage>
        <taxon>Bacteria</taxon>
        <taxon>Pseudomonadati</taxon>
        <taxon>Pseudomonadota</taxon>
        <taxon>Gammaproteobacteria</taxon>
        <taxon>Enterobacterales</taxon>
        <taxon>Enterobacteriaceae</taxon>
        <taxon>Escherichia</taxon>
    </lineage>
</organism>
<accession>P23524</accession>
<accession>Q2M985</accession>
<keyword id="KW-0067">ATP-binding</keyword>
<keyword id="KW-0418">Kinase</keyword>
<keyword id="KW-0547">Nucleotide-binding</keyword>
<keyword id="KW-1185">Reference proteome</keyword>
<keyword id="KW-0808">Transferase</keyword>
<reference key="1">
    <citation type="journal article" date="1991" name="J. Bacteriol.">
        <title>Precise mapping of the rnpB gene encoding the RNA component of RNase P in Escherichia coli K-12.</title>
        <authorList>
            <person name="Komine Y."/>
            <person name="Inokuchi H."/>
        </authorList>
    </citation>
    <scope>NUCLEOTIDE SEQUENCE [GENOMIC DNA]</scope>
    <source>
        <strain>K12 / W3110 / ATCC 27325 / DSM 5911</strain>
    </source>
</reference>
<reference key="2">
    <citation type="journal article" date="1997" name="Science">
        <title>The complete genome sequence of Escherichia coli K-12.</title>
        <authorList>
            <person name="Blattner F.R."/>
            <person name="Plunkett G. III"/>
            <person name="Bloch C.A."/>
            <person name="Perna N.T."/>
            <person name="Burland V."/>
            <person name="Riley M."/>
            <person name="Collado-Vides J."/>
            <person name="Glasner J.D."/>
            <person name="Rode C.K."/>
            <person name="Mayhew G.F."/>
            <person name="Gregor J."/>
            <person name="Davis N.W."/>
            <person name="Kirkpatrick H.A."/>
            <person name="Goeden M.A."/>
            <person name="Rose D.J."/>
            <person name="Mau B."/>
            <person name="Shao Y."/>
        </authorList>
    </citation>
    <scope>NUCLEOTIDE SEQUENCE [LARGE SCALE GENOMIC DNA]</scope>
    <source>
        <strain>K12 / MG1655 / ATCC 47076</strain>
    </source>
</reference>
<reference key="3">
    <citation type="journal article" date="2006" name="Mol. Syst. Biol.">
        <title>Highly accurate genome sequences of Escherichia coli K-12 strains MG1655 and W3110.</title>
        <authorList>
            <person name="Hayashi K."/>
            <person name="Morooka N."/>
            <person name="Yamamoto Y."/>
            <person name="Fujita K."/>
            <person name="Isono K."/>
            <person name="Choi S."/>
            <person name="Ohtsubo E."/>
            <person name="Baba T."/>
            <person name="Wanner B.L."/>
            <person name="Mori H."/>
            <person name="Horiuchi T."/>
        </authorList>
    </citation>
    <scope>NUCLEOTIDE SEQUENCE [LARGE SCALE GENOMIC DNA]</scope>
    <source>
        <strain>K12 / W3110 / ATCC 27325 / DSM 5911</strain>
    </source>
</reference>
<reference key="4">
    <citation type="journal article" date="1969" name="J. Bacteriol.">
        <title>Two forms of D-glycerate kinase in Escherichia coli.</title>
        <authorList>
            <person name="Ornston M.K."/>
            <person name="Ornston L.N."/>
        </authorList>
    </citation>
    <scope>BIOPHYSICOCHEMICAL PROPERTIES</scope>
    <scope>ENZYME STABILITY</scope>
    <scope>INDUCTION</scope>
    <source>
        <strain>K1</strain>
        <strain>K12</strain>
        <strain>R4</strain>
    </source>
</reference>
<reference key="5">
    <citation type="journal article" date="1998" name="Biochemistry">
        <title>Evolution of enzymatic activities in the enolase superfamily: characterization of the (D)-glucarate/galactarate catabolic pathway in Escherichia coli.</title>
        <authorList>
            <person name="Hubbard B.K."/>
            <person name="Koch M."/>
            <person name="Palmer D.R."/>
            <person name="Babbitt P.C."/>
            <person name="Gerlt J.A."/>
        </authorList>
    </citation>
    <scope>FUNCTION</scope>
    <scope>CATALYTIC ACTIVITY</scope>
    <scope>BIOPHYSICOCHEMICAL PROPERTIES</scope>
    <scope>INDUCTION</scope>
    <source>
        <strain>K12 / MG1655 / ATCC 47076</strain>
    </source>
</reference>
<feature type="chain" id="PRO_0000071532" description="Glycerate 2-kinase">
    <location>
        <begin position="1"/>
        <end position="381"/>
    </location>
</feature>
<name>GLXK1_ECOLI</name>
<evidence type="ECO:0000269" key="1">
    <source>
    </source>
</evidence>
<evidence type="ECO:0000269" key="2">
    <source>
    </source>
</evidence>
<evidence type="ECO:0000303" key="3">
    <source>
    </source>
</evidence>
<evidence type="ECO:0000305" key="4"/>
<comment type="function">
    <text evidence="2">Catalyzes the transfer of the phosphate group from adenosine triphosphate (ATP) to (R)-glycerate to form (2R)-2-phosphoglycerate, an enzymatic step in (L)-glucarate/galactarate catabolic pathway.</text>
</comment>
<comment type="catalytic activity">
    <reaction evidence="2">
        <text>(R)-glycerate + ATP = (2R)-2-phosphoglycerate + ADP + H(+)</text>
        <dbReference type="Rhea" id="RHEA:27377"/>
        <dbReference type="ChEBI" id="CHEBI:15378"/>
        <dbReference type="ChEBI" id="CHEBI:16659"/>
        <dbReference type="ChEBI" id="CHEBI:30616"/>
        <dbReference type="ChEBI" id="CHEBI:58289"/>
        <dbReference type="ChEBI" id="CHEBI:456216"/>
        <dbReference type="EC" id="2.7.1.165"/>
    </reaction>
    <physiologicalReaction direction="left-to-right" evidence="2">
        <dbReference type="Rhea" id="RHEA:27378"/>
    </physiologicalReaction>
</comment>
<comment type="biophysicochemical properties">
    <kinetics>
        <KM evidence="1 2">51 uM for glycerate</KM>
        <KM evidence="1 2">70 uM for glycerate</KM>
        <KM evidence="1 2">61 uM for ATP</KM>
    </kinetics>
    <phDependence>
        <text evidence="1 2">Optimum pH is 7.3-7.9.</text>
    </phDependence>
</comment>
<comment type="induction">
    <text evidence="1 2">In glycerate, glucarate and glycolate-grown cells but not in glucose-grown cells (at protein level).</text>
</comment>
<comment type="miscellaneous">
    <text>GK1 has a half-life of 92 minutes while GK2 has a half-life of 11 minutes at 49 degrees Celsius.</text>
</comment>
<comment type="similarity">
    <text evidence="4">Belongs to the glycerate kinase type-1 family.</text>
</comment>
<comment type="caution">
    <text evidence="4">E.coli has 2 glycerate kinases, GK1 and GK2; it is not clear which gene encodes which enzyme.</text>
</comment>
<comment type="sequence caution" evidence="4">
    <conflict type="erroneous initiation">
        <sequence resource="EMBL-CDS" id="AAA57927"/>
    </conflict>
    <text>Extended N-terminus.</text>
</comment>
<comment type="sequence caution" evidence="4">
    <conflict type="erroneous initiation">
        <sequence resource="EMBL-CDS" id="BAA14239"/>
    </conflict>
    <text>Extended N-terminus.</text>
</comment>
<comment type="sequence caution" evidence="4">
    <conflict type="erroneous initiation">
        <sequence resource="EMBL-CDS" id="BAE77171"/>
    </conflict>
    <text>Extended N-terminus.</text>
</comment>
<protein>
    <recommendedName>
        <fullName>Glycerate 2-kinase</fullName>
        <ecNumber evidence="2">2.7.1.165</ecNumber>
    </recommendedName>
    <alternativeName>
        <fullName>Glycerate kinase 1</fullName>
        <shortName evidence="3">GK1</shortName>
    </alternativeName>
</protein>